<protein>
    <recommendedName>
        <fullName evidence="1">Ribosome-binding factor A</fullName>
    </recommendedName>
</protein>
<name>RBFA_PROM2</name>
<dbReference type="EMBL" id="CP000825">
    <property type="protein sequence ID" value="ABV49749.1"/>
    <property type="molecule type" value="Genomic_DNA"/>
</dbReference>
<dbReference type="RefSeq" id="WP_012006928.1">
    <property type="nucleotide sequence ID" value="NC_009840.1"/>
</dbReference>
<dbReference type="SMR" id="A8G2B8"/>
<dbReference type="STRING" id="93060.P9215_01301"/>
<dbReference type="KEGG" id="pmh:P9215_01301"/>
<dbReference type="eggNOG" id="COG0858">
    <property type="taxonomic scope" value="Bacteria"/>
</dbReference>
<dbReference type="HOGENOM" id="CLU_089475_2_1_3"/>
<dbReference type="OrthoDB" id="307788at2"/>
<dbReference type="Proteomes" id="UP000002014">
    <property type="component" value="Chromosome"/>
</dbReference>
<dbReference type="GO" id="GO:0005829">
    <property type="term" value="C:cytosol"/>
    <property type="evidence" value="ECO:0007669"/>
    <property type="project" value="TreeGrafter"/>
</dbReference>
<dbReference type="GO" id="GO:0043024">
    <property type="term" value="F:ribosomal small subunit binding"/>
    <property type="evidence" value="ECO:0007669"/>
    <property type="project" value="TreeGrafter"/>
</dbReference>
<dbReference type="GO" id="GO:0030490">
    <property type="term" value="P:maturation of SSU-rRNA"/>
    <property type="evidence" value="ECO:0007669"/>
    <property type="project" value="UniProtKB-UniRule"/>
</dbReference>
<dbReference type="Gene3D" id="3.30.300.20">
    <property type="match status" value="1"/>
</dbReference>
<dbReference type="HAMAP" id="MF_00003">
    <property type="entry name" value="RbfA"/>
    <property type="match status" value="1"/>
</dbReference>
<dbReference type="InterPro" id="IPR015946">
    <property type="entry name" value="KH_dom-like_a/b"/>
</dbReference>
<dbReference type="InterPro" id="IPR000238">
    <property type="entry name" value="RbfA"/>
</dbReference>
<dbReference type="InterPro" id="IPR023799">
    <property type="entry name" value="RbfA_dom_sf"/>
</dbReference>
<dbReference type="InterPro" id="IPR020053">
    <property type="entry name" value="Ribosome-bd_factorA_CS"/>
</dbReference>
<dbReference type="NCBIfam" id="TIGR00082">
    <property type="entry name" value="rbfA"/>
    <property type="match status" value="1"/>
</dbReference>
<dbReference type="PANTHER" id="PTHR33515">
    <property type="entry name" value="RIBOSOME-BINDING FACTOR A, CHLOROPLASTIC-RELATED"/>
    <property type="match status" value="1"/>
</dbReference>
<dbReference type="PANTHER" id="PTHR33515:SF1">
    <property type="entry name" value="RIBOSOME-BINDING FACTOR A, CHLOROPLASTIC-RELATED"/>
    <property type="match status" value="1"/>
</dbReference>
<dbReference type="Pfam" id="PF02033">
    <property type="entry name" value="RBFA"/>
    <property type="match status" value="1"/>
</dbReference>
<dbReference type="SUPFAM" id="SSF89919">
    <property type="entry name" value="Ribosome-binding factor A, RbfA"/>
    <property type="match status" value="1"/>
</dbReference>
<dbReference type="PROSITE" id="PS01319">
    <property type="entry name" value="RBFA"/>
    <property type="match status" value="1"/>
</dbReference>
<comment type="function">
    <text evidence="1">One of several proteins that assist in the late maturation steps of the functional core of the 30S ribosomal subunit. Associates with free 30S ribosomal subunits (but not with 30S subunits that are part of 70S ribosomes or polysomes). Required for efficient processing of 16S rRNA. May interact with the 5'-terminal helix region of 16S rRNA.</text>
</comment>
<comment type="subunit">
    <text evidence="1">Monomer. Binds 30S ribosomal subunits, but not 50S ribosomal subunits or 70S ribosomes.</text>
</comment>
<comment type="subcellular location">
    <subcellularLocation>
        <location evidence="1">Cytoplasm</location>
    </subcellularLocation>
</comment>
<comment type="similarity">
    <text evidence="1">Belongs to the RbfA family.</text>
</comment>
<evidence type="ECO:0000255" key="1">
    <source>
        <dbReference type="HAMAP-Rule" id="MF_00003"/>
    </source>
</evidence>
<keyword id="KW-0963">Cytoplasm</keyword>
<keyword id="KW-0690">Ribosome biogenesis</keyword>
<reference key="1">
    <citation type="journal article" date="2007" name="PLoS Genet.">
        <title>Patterns and implications of gene gain and loss in the evolution of Prochlorococcus.</title>
        <authorList>
            <person name="Kettler G.C."/>
            <person name="Martiny A.C."/>
            <person name="Huang K."/>
            <person name="Zucker J."/>
            <person name="Coleman M.L."/>
            <person name="Rodrigue S."/>
            <person name="Chen F."/>
            <person name="Lapidus A."/>
            <person name="Ferriera S."/>
            <person name="Johnson J."/>
            <person name="Steglich C."/>
            <person name="Church G.M."/>
            <person name="Richardson P."/>
            <person name="Chisholm S.W."/>
        </authorList>
    </citation>
    <scope>NUCLEOTIDE SEQUENCE [LARGE SCALE GENOMIC DNA]</scope>
    <source>
        <strain>MIT 9215</strain>
    </source>
</reference>
<sequence length="130" mass="14866">MPNNYRLAKVSSLLKKEITLILQNELEIDLISDHFVNISKIDLSGDLQHCKIYITSTAQEKVKKEIVSNLNTAKSSIRHSLGKRIEMRRVPEIIFKDDVVLDKGLSVLKLLDELKNKNQNHNVEDEDAKS</sequence>
<organism>
    <name type="scientific">Prochlorococcus marinus (strain MIT 9215)</name>
    <dbReference type="NCBI Taxonomy" id="93060"/>
    <lineage>
        <taxon>Bacteria</taxon>
        <taxon>Bacillati</taxon>
        <taxon>Cyanobacteriota</taxon>
        <taxon>Cyanophyceae</taxon>
        <taxon>Synechococcales</taxon>
        <taxon>Prochlorococcaceae</taxon>
        <taxon>Prochlorococcus</taxon>
    </lineage>
</organism>
<feature type="chain" id="PRO_1000057023" description="Ribosome-binding factor A">
    <location>
        <begin position="1"/>
        <end position="130"/>
    </location>
</feature>
<proteinExistence type="inferred from homology"/>
<gene>
    <name evidence="1" type="primary">rbfA</name>
    <name type="ordered locus">P9215_01301</name>
</gene>
<accession>A8G2B8</accession>